<protein>
    <recommendedName>
        <fullName evidence="1">Na(+)-translocating NADH-quinone reductase subunit A</fullName>
        <shortName evidence="1">Na(+)-NQR subunit A</shortName>
        <shortName evidence="1">Na(+)-translocating NQR subunit A</shortName>
        <ecNumber evidence="1">7.2.1.1</ecNumber>
    </recommendedName>
    <alternativeName>
        <fullName evidence="1">NQR complex subunit A</fullName>
    </alternativeName>
    <alternativeName>
        <fullName evidence="1">NQR-1 subunit A</fullName>
    </alternativeName>
</protein>
<proteinExistence type="evidence at protein level"/>
<evidence type="ECO:0000255" key="1">
    <source>
        <dbReference type="HAMAP-Rule" id="MF_00425"/>
    </source>
</evidence>
<evidence type="ECO:0000305" key="2"/>
<evidence type="ECO:0007829" key="3">
    <source>
        <dbReference type="PDB" id="4U9O"/>
    </source>
</evidence>
<evidence type="ECO:0007829" key="4">
    <source>
        <dbReference type="PDB" id="4U9Q"/>
    </source>
</evidence>
<evidence type="ECO:0007829" key="5">
    <source>
        <dbReference type="PDB" id="8A1U"/>
    </source>
</evidence>
<feature type="chain" id="PRO_0000214205" description="Na(+)-translocating NADH-quinone reductase subunit A">
    <location>
        <begin position="1"/>
        <end position="446"/>
    </location>
</feature>
<feature type="strand" evidence="5">
    <location>
        <begin position="1"/>
        <end position="3"/>
    </location>
</feature>
<feature type="strand" evidence="3">
    <location>
        <begin position="17"/>
        <end position="22"/>
    </location>
</feature>
<feature type="strand" evidence="3">
    <location>
        <begin position="28"/>
        <end position="31"/>
    </location>
</feature>
<feature type="helix" evidence="3">
    <location>
        <begin position="33"/>
        <end position="35"/>
    </location>
</feature>
<feature type="strand" evidence="3">
    <location>
        <begin position="41"/>
        <end position="44"/>
    </location>
</feature>
<feature type="strand" evidence="3">
    <location>
        <begin position="56"/>
        <end position="60"/>
    </location>
</feature>
<feature type="strand" evidence="3">
    <location>
        <begin position="67"/>
        <end position="69"/>
    </location>
</feature>
<feature type="strand" evidence="3">
    <location>
        <begin position="71"/>
        <end position="81"/>
    </location>
</feature>
<feature type="helix" evidence="3">
    <location>
        <begin position="83"/>
        <end position="85"/>
    </location>
</feature>
<feature type="strand" evidence="3">
    <location>
        <begin position="87"/>
        <end position="94"/>
    </location>
</feature>
<feature type="helix" evidence="3">
    <location>
        <begin position="107"/>
        <end position="112"/>
    </location>
</feature>
<feature type="helix" evidence="3">
    <location>
        <begin position="115"/>
        <end position="125"/>
    </location>
</feature>
<feature type="helix" evidence="3">
    <location>
        <begin position="127"/>
        <end position="130"/>
    </location>
</feature>
<feature type="strand" evidence="3">
    <location>
        <begin position="132"/>
        <end position="134"/>
    </location>
</feature>
<feature type="turn" evidence="3">
    <location>
        <begin position="135"/>
        <end position="137"/>
    </location>
</feature>
<feature type="strand" evidence="3">
    <location>
        <begin position="147"/>
        <end position="153"/>
    </location>
</feature>
<feature type="helix" evidence="3">
    <location>
        <begin position="163"/>
        <end position="168"/>
    </location>
</feature>
<feature type="helix" evidence="3">
    <location>
        <begin position="171"/>
        <end position="184"/>
    </location>
</feature>
<feature type="strand" evidence="3">
    <location>
        <begin position="185"/>
        <end position="193"/>
    </location>
</feature>
<feature type="strand" evidence="3">
    <location>
        <begin position="206"/>
        <end position="210"/>
    </location>
</feature>
<feature type="strand" evidence="4">
    <location>
        <begin position="213"/>
        <end position="215"/>
    </location>
</feature>
<feature type="strand" evidence="4">
    <location>
        <begin position="226"/>
        <end position="229"/>
    </location>
</feature>
<feature type="strand" evidence="3">
    <location>
        <begin position="236"/>
        <end position="240"/>
    </location>
</feature>
<feature type="helix" evidence="3">
    <location>
        <begin position="241"/>
        <end position="253"/>
    </location>
</feature>
<feature type="strand" evidence="3">
    <location>
        <begin position="259"/>
        <end position="266"/>
    </location>
</feature>
<feature type="strand" evidence="3">
    <location>
        <begin position="269"/>
        <end position="271"/>
    </location>
</feature>
<feature type="strand" evidence="3">
    <location>
        <begin position="273"/>
        <end position="278"/>
    </location>
</feature>
<feature type="helix" evidence="3">
    <location>
        <begin position="283"/>
        <end position="286"/>
    </location>
</feature>
<feature type="turn" evidence="3">
    <location>
        <begin position="287"/>
        <end position="289"/>
    </location>
</feature>
<feature type="strand" evidence="3">
    <location>
        <begin position="296"/>
        <end position="301"/>
    </location>
</feature>
<feature type="strand" evidence="3">
    <location>
        <begin position="303"/>
        <end position="308"/>
    </location>
</feature>
<feature type="helix" evidence="3">
    <location>
        <begin position="311"/>
        <end position="313"/>
    </location>
</feature>
<feature type="strand" evidence="3">
    <location>
        <begin position="322"/>
        <end position="327"/>
    </location>
</feature>
<feature type="turn" evidence="5">
    <location>
        <begin position="335"/>
        <end position="338"/>
    </location>
</feature>
<feature type="strand" evidence="5">
    <location>
        <begin position="347"/>
        <end position="349"/>
    </location>
</feature>
<feature type="helix" evidence="5">
    <location>
        <begin position="352"/>
        <end position="355"/>
    </location>
</feature>
<feature type="strand" evidence="5">
    <location>
        <begin position="364"/>
        <end position="366"/>
    </location>
</feature>
<feature type="helix" evidence="5">
    <location>
        <begin position="379"/>
        <end position="383"/>
    </location>
</feature>
<feature type="strand" evidence="5">
    <location>
        <begin position="386"/>
        <end position="388"/>
    </location>
</feature>
<feature type="helix" evidence="5">
    <location>
        <begin position="390"/>
        <end position="399"/>
    </location>
</feature>
<feature type="helix" evidence="5">
    <location>
        <begin position="402"/>
        <end position="407"/>
    </location>
</feature>
<feature type="helix" evidence="5">
    <location>
        <begin position="410"/>
        <end position="412"/>
    </location>
</feature>
<feature type="helix" evidence="5">
    <location>
        <begin position="415"/>
        <end position="418"/>
    </location>
</feature>
<feature type="helix" evidence="5">
    <location>
        <begin position="419"/>
        <end position="424"/>
    </location>
</feature>
<feature type="helix" evidence="5">
    <location>
        <begin position="431"/>
        <end position="445"/>
    </location>
</feature>
<dbReference type="EC" id="7.2.1.1" evidence="1"/>
<dbReference type="EMBL" id="AF117331">
    <property type="protein sequence ID" value="AAD29962.1"/>
    <property type="molecule type" value="Genomic_DNA"/>
</dbReference>
<dbReference type="EMBL" id="AE003852">
    <property type="protein sequence ID" value="AAF95439.1"/>
    <property type="status" value="ALT_INIT"/>
    <property type="molecule type" value="Genomic_DNA"/>
</dbReference>
<dbReference type="PIR" id="G82094">
    <property type="entry name" value="G82094"/>
</dbReference>
<dbReference type="RefSeq" id="NP_231926.1">
    <property type="nucleotide sequence ID" value="NC_002505.1"/>
</dbReference>
<dbReference type="RefSeq" id="WP_001906078.1">
    <property type="nucleotide sequence ID" value="NZ_LT906614.1"/>
</dbReference>
<dbReference type="PDB" id="4U9O">
    <property type="method" value="X-ray"/>
    <property type="resolution" value="1.60 A"/>
    <property type="chains" value="A=1-357"/>
</dbReference>
<dbReference type="PDB" id="4U9Q">
    <property type="method" value="X-ray"/>
    <property type="resolution" value="2.10 A"/>
    <property type="chains" value="A/B=1-357"/>
</dbReference>
<dbReference type="PDB" id="8A1U">
    <property type="method" value="EM"/>
    <property type="resolution" value="2.86 A"/>
    <property type="chains" value="A=1-446"/>
</dbReference>
<dbReference type="PDB" id="8ACY">
    <property type="method" value="X-ray"/>
    <property type="resolution" value="3.50 A"/>
    <property type="chains" value="A=1-446"/>
</dbReference>
<dbReference type="PDB" id="8EVU">
    <property type="method" value="EM"/>
    <property type="resolution" value="2.58 A"/>
    <property type="chains" value="A=1-446"/>
</dbReference>
<dbReference type="PDBsum" id="4U9O"/>
<dbReference type="PDBsum" id="4U9Q"/>
<dbReference type="PDBsum" id="8A1U"/>
<dbReference type="PDBsum" id="8ACY"/>
<dbReference type="PDBsum" id="8EVU"/>
<dbReference type="EMDB" id="EMD-15089"/>
<dbReference type="EMDB" id="EMD-28637"/>
<dbReference type="SMR" id="Q9KPS1"/>
<dbReference type="DIP" id="DIP-61337N"/>
<dbReference type="IntAct" id="Q9KPS1">
    <property type="interactions" value="5"/>
</dbReference>
<dbReference type="STRING" id="243277.VC_2295"/>
<dbReference type="DNASU" id="2613091"/>
<dbReference type="EnsemblBacteria" id="AAF95439">
    <property type="protein sequence ID" value="AAF95439"/>
    <property type="gene ID" value="VC_2295"/>
</dbReference>
<dbReference type="KEGG" id="vch:VC_2295"/>
<dbReference type="PATRIC" id="fig|243277.26.peg.2189"/>
<dbReference type="eggNOG" id="COG1726">
    <property type="taxonomic scope" value="Bacteria"/>
</dbReference>
<dbReference type="HOGENOM" id="CLU_046656_0_0_6"/>
<dbReference type="BioCyc" id="MetaCyc:MONOMER-16197"/>
<dbReference type="BRENDA" id="7.2.1.1">
    <property type="organism ID" value="15862"/>
</dbReference>
<dbReference type="EvolutionaryTrace" id="Q9KPS1"/>
<dbReference type="Proteomes" id="UP000000584">
    <property type="component" value="Chromosome 1"/>
</dbReference>
<dbReference type="GO" id="GO:0016655">
    <property type="term" value="F:oxidoreductase activity, acting on NAD(P)H, quinone or similar compound as acceptor"/>
    <property type="evidence" value="ECO:0007669"/>
    <property type="project" value="UniProtKB-UniRule"/>
</dbReference>
<dbReference type="GO" id="GO:0006814">
    <property type="term" value="P:sodium ion transport"/>
    <property type="evidence" value="ECO:0007669"/>
    <property type="project" value="UniProtKB-UniRule"/>
</dbReference>
<dbReference type="HAMAP" id="MF_00425">
    <property type="entry name" value="NqrA"/>
    <property type="match status" value="1"/>
</dbReference>
<dbReference type="InterPro" id="IPR008703">
    <property type="entry name" value="NqrA"/>
</dbReference>
<dbReference type="InterPro" id="IPR056148">
    <property type="entry name" value="NQRA_2nd"/>
</dbReference>
<dbReference type="InterPro" id="IPR022615">
    <property type="entry name" value="NqrA_C_domain"/>
</dbReference>
<dbReference type="InterPro" id="IPR056147">
    <property type="entry name" value="NQRA_N"/>
</dbReference>
<dbReference type="NCBIfam" id="TIGR01936">
    <property type="entry name" value="nqrA"/>
    <property type="match status" value="1"/>
</dbReference>
<dbReference type="NCBIfam" id="NF003759">
    <property type="entry name" value="PRK05352.1-2"/>
    <property type="match status" value="1"/>
</dbReference>
<dbReference type="PANTHER" id="PTHR37839">
    <property type="entry name" value="NA(+)-TRANSLOCATING NADH-QUINONE REDUCTASE SUBUNIT A"/>
    <property type="match status" value="1"/>
</dbReference>
<dbReference type="PANTHER" id="PTHR37839:SF1">
    <property type="entry name" value="NA(+)-TRANSLOCATING NADH-QUINONE REDUCTASE SUBUNIT A"/>
    <property type="match status" value="1"/>
</dbReference>
<dbReference type="Pfam" id="PF24836">
    <property type="entry name" value="NQRA_2nd"/>
    <property type="match status" value="1"/>
</dbReference>
<dbReference type="Pfam" id="PF05896">
    <property type="entry name" value="NQRA_N"/>
    <property type="match status" value="1"/>
</dbReference>
<dbReference type="Pfam" id="PF11973">
    <property type="entry name" value="NQRA_SLBB"/>
    <property type="match status" value="1"/>
</dbReference>
<reference key="1">
    <citation type="journal article" date="1999" name="Proc. Natl. Acad. Sci. U.S.A.">
        <title>Effects of changes in membrane sodium flux on virulence gene expression in Vibrio cholerae.</title>
        <authorList>
            <person name="Haese C.C."/>
            <person name="Mekalanos J.J."/>
        </authorList>
    </citation>
    <scope>NUCLEOTIDE SEQUENCE [GENOMIC DNA]</scope>
    <source>
        <strain>ATCC 39315 / El Tor Inaba N16961</strain>
    </source>
</reference>
<reference key="2">
    <citation type="journal article" date="2000" name="Nature">
        <title>DNA sequence of both chromosomes of the cholera pathogen Vibrio cholerae.</title>
        <authorList>
            <person name="Heidelberg J.F."/>
            <person name="Eisen J.A."/>
            <person name="Nelson W.C."/>
            <person name="Clayton R.A."/>
            <person name="Gwinn M.L."/>
            <person name="Dodson R.J."/>
            <person name="Haft D.H."/>
            <person name="Hickey E.K."/>
            <person name="Peterson J.D."/>
            <person name="Umayam L.A."/>
            <person name="Gill S.R."/>
            <person name="Nelson K.E."/>
            <person name="Read T.D."/>
            <person name="Tettelin H."/>
            <person name="Richardson D.L."/>
            <person name="Ermolaeva M.D."/>
            <person name="Vamathevan J.J."/>
            <person name="Bass S."/>
            <person name="Qin H."/>
            <person name="Dragoi I."/>
            <person name="Sellers P."/>
            <person name="McDonald L.A."/>
            <person name="Utterback T.R."/>
            <person name="Fleischmann R.D."/>
            <person name="Nierman W.C."/>
            <person name="White O."/>
            <person name="Salzberg S.L."/>
            <person name="Smith H.O."/>
            <person name="Colwell R.R."/>
            <person name="Mekalanos J.J."/>
            <person name="Venter J.C."/>
            <person name="Fraser C.M."/>
        </authorList>
    </citation>
    <scope>NUCLEOTIDE SEQUENCE [LARGE SCALE GENOMIC DNA]</scope>
    <source>
        <strain>ATCC 39315 / El Tor Inaba N16961</strain>
    </source>
</reference>
<keyword id="KW-0002">3D-structure</keyword>
<keyword id="KW-0406">Ion transport</keyword>
<keyword id="KW-0520">NAD</keyword>
<keyword id="KW-1185">Reference proteome</keyword>
<keyword id="KW-0915">Sodium</keyword>
<keyword id="KW-0739">Sodium transport</keyword>
<keyword id="KW-1278">Translocase</keyword>
<keyword id="KW-0813">Transport</keyword>
<keyword id="KW-0830">Ubiquinone</keyword>
<name>NQRA_VIBCH</name>
<gene>
    <name evidence="1" type="primary">nqrA</name>
    <name type="ordered locus">VC_2295</name>
</gene>
<comment type="function">
    <text evidence="1">NQR complex catalyzes the reduction of ubiquinone-1 to ubiquinol by two successive reactions, coupled with the transport of Na(+) ions from the cytoplasm to the periplasm. NqrA to NqrE are probably involved in the second step, the conversion of ubisemiquinone to ubiquinol.</text>
</comment>
<comment type="catalytic activity">
    <reaction evidence="1">
        <text>a ubiquinone + n Na(+)(in) + NADH + H(+) = a ubiquinol + n Na(+)(out) + NAD(+)</text>
        <dbReference type="Rhea" id="RHEA:47748"/>
        <dbReference type="Rhea" id="RHEA-COMP:9565"/>
        <dbReference type="Rhea" id="RHEA-COMP:9566"/>
        <dbReference type="ChEBI" id="CHEBI:15378"/>
        <dbReference type="ChEBI" id="CHEBI:16389"/>
        <dbReference type="ChEBI" id="CHEBI:17976"/>
        <dbReference type="ChEBI" id="CHEBI:29101"/>
        <dbReference type="ChEBI" id="CHEBI:57540"/>
        <dbReference type="ChEBI" id="CHEBI:57945"/>
        <dbReference type="EC" id="7.2.1.1"/>
    </reaction>
</comment>
<comment type="subunit">
    <text evidence="1">Composed of six subunits; NqrA, NqrB, NqrC, NqrD, NqrE and NqrF.</text>
</comment>
<comment type="similarity">
    <text evidence="1">Belongs to the NqrA family.</text>
</comment>
<comment type="sequence caution" evidence="2">
    <conflict type="erroneous initiation">
        <sequence resource="EMBL-CDS" id="AAF95439"/>
    </conflict>
</comment>
<organism>
    <name type="scientific">Vibrio cholerae serotype O1 (strain ATCC 39315 / El Tor Inaba N16961)</name>
    <dbReference type="NCBI Taxonomy" id="243277"/>
    <lineage>
        <taxon>Bacteria</taxon>
        <taxon>Pseudomonadati</taxon>
        <taxon>Pseudomonadota</taxon>
        <taxon>Gammaproteobacteria</taxon>
        <taxon>Vibrionales</taxon>
        <taxon>Vibrionaceae</taxon>
        <taxon>Vibrio</taxon>
    </lineage>
</organism>
<sequence>MITIKKGLDLPIAGTPSQVISDGKAIKKVALLGEEYVGMRPTMHVRVGDEVKKAQILFEDKKNPGVKFTSPVSGKVVEINRGAKRVLQSVVIEVAGDDQVTFDKFEANQLASLNRDAIKTQLVESGLWTAFRTRPFSKVPAIDSTSEAIFVTAMDTNPLAAEPTVVINEQSEAFVAGLDVLSALTTGKVYVCKKGTSLPRSQQPNVEEHVFDGPHPAGLAGTHMHFLYPVSADHVAWSINYQDVIAVGQLFLTGELYTQRVVSLAGPVVNKPRLVRTVMGASLEQLVDSEIMPGEVRIISGSVLSGTKATGPHAYLGRYHLQVSVLREGRDKELFGWAMPGKNKFSVTRSFLGHLFKGQVYNMTTTTNGSDRSMVPIGNYEKVMPLDMEPTLLLRDLCAGDSDSAVRLGALELDEEDLALCTFVCPGKYEYGQLLRECLDKIEKEG</sequence>
<accession>Q9KPS1</accession>
<accession>Q9X4Q3</accession>